<gene>
    <name type="primary">GP64</name>
    <name type="synonym">P64</name>
    <name type="ORF">ORF126</name>
</gene>
<feature type="signal peptide">
    <location>
        <begin position="1"/>
        <end position="17"/>
    </location>
</feature>
<feature type="chain" id="PRO_0000036747" description="Major envelope glycoprotein">
    <location>
        <begin position="18"/>
        <end position="509"/>
    </location>
</feature>
<feature type="transmembrane region" description="Helical" evidence="2">
    <location>
        <begin position="480"/>
        <end position="502"/>
    </location>
</feature>
<feature type="lipid moiety-binding region" description="O-palmitoyl serine; by host" evidence="1">
    <location>
        <position position="479"/>
    </location>
</feature>
<feature type="glycosylation site" description="N-linked (GlcNAc...) asparagine; by host" evidence="2">
    <location>
        <position position="156"/>
    </location>
</feature>
<feature type="glycosylation site" description="N-linked (GlcNAc...) asparagine; by host" evidence="2">
    <location>
        <position position="189"/>
    </location>
</feature>
<feature type="glycosylation site" description="N-linked (GlcNAc...) asparagine; by host" evidence="2">
    <location>
        <position position="194"/>
    </location>
</feature>
<feature type="glycosylation site" description="N-linked (GlcNAc...) asparagine; by host" evidence="2">
    <location>
        <position position="351"/>
    </location>
</feature>
<feature type="glycosylation site" description="N-linked (GlcNAc...) asparagine; by host" evidence="2">
    <location>
        <position position="381"/>
    </location>
</feature>
<feature type="glycosylation site" description="N-linked (GlcNAc...) asparagine; by host" evidence="2">
    <location>
        <position position="423"/>
    </location>
</feature>
<feature type="glycosylation site" description="N-linked (GlcNAc...) asparagine; by host" evidence="2">
    <location>
        <position position="474"/>
    </location>
</feature>
<sequence>MVRIVVFILLCVRFSAPAEHCNAQMKSGPWRIKSLPIAAPKETLQKDVEIEIVETDLDQNVVIGYKGYYQAYAYNGGSLDPNSRVEETMKTLDVAKEDLLMWGIRQQCEVGEELIDQWGSDSESCFRNMDGRGVWVAGKELVKRQNNNHFAHHTCNRSWRCGVSTAKMYTRLECDDDTDDCKVTILDINGTSINVTENKVLHRDGVSMILKQKSTFSRRTEKVACLLIKDDKADPNSVTREHCLVDNDIFDLSKNTWFCKFNRCIKRRSENVVKQRPHTWRHDRPPKHDEGATATKGDLMHIQEELMYENDLLRMNLELMHAHINKLNNMMHDLIVSVAKVDERLIGNLMNNSVSSTFLSDDTFLLMPCTSPPPHTSNCYNNSIYKEGRWVANTDTSQCIDFNNYKELAIDDDIEFWIPTIGNTSYHESWKDASGWSFIAQQKSNLISTMENTKFGGHTTSLSDIADMAKGELNATLYSFMLGHGFTFVLIVGVILFLVCMLRNRPSHY</sequence>
<evidence type="ECO:0000250" key="1"/>
<evidence type="ECO:0000255" key="2"/>
<evidence type="ECO:0000305" key="3"/>
<name>FUS_NPVOP</name>
<organism>
    <name type="scientific">Orgyia pseudotsugata multicapsid polyhedrosis virus</name>
    <name type="common">OpMNPV</name>
    <dbReference type="NCBI Taxonomy" id="262177"/>
    <lineage>
        <taxon>Viruses</taxon>
        <taxon>Viruses incertae sedis</taxon>
        <taxon>Naldaviricetes</taxon>
        <taxon>Lefavirales</taxon>
        <taxon>Baculoviridae</taxon>
        <taxon>Alphabaculovirus</taxon>
        <taxon>Alphabaculovirus orpseudotsugatae</taxon>
    </lineage>
</organism>
<accession>P13625</accession>
<proteinExistence type="inferred from homology"/>
<reference key="1">
    <citation type="journal article" date="1989" name="Virology">
        <title>Location, sequence, transcriptional mapping, and temporal expression of the gp64 envelope glycoprotein gene of the Orgyia pseudotsugata multicapsid nuclear polyhedrosis virus.</title>
        <authorList>
            <person name="Blissard G.W."/>
            <person name="Rohrmann G.F."/>
        </authorList>
    </citation>
    <scope>NUCLEOTIDE SEQUENCE [GENOMIC DNA]</scope>
</reference>
<reference key="2">
    <citation type="journal article" date="1997" name="Virology">
        <title>The sequence of the Orgyia pseudotsugata multinucleocapsid nuclear polyhedrosis virus genome.</title>
        <authorList>
            <person name="Ahrens C.H."/>
            <person name="Russell R.R."/>
            <person name="Funk C.J."/>
            <person name="Evans J."/>
            <person name="Harwood S."/>
            <person name="Rohrmann G.F."/>
        </authorList>
    </citation>
    <scope>NUCLEOTIDE SEQUENCE [LARGE SCALE GENOMIC DNA]</scope>
</reference>
<keyword id="KW-1170">Fusion of virus membrane with host endosomal membrane</keyword>
<keyword id="KW-1168">Fusion of virus membrane with host membrane</keyword>
<keyword id="KW-0325">Glycoprotein</keyword>
<keyword id="KW-1032">Host cell membrane</keyword>
<keyword id="KW-1043">Host membrane</keyword>
<keyword id="KW-0449">Lipoprotein</keyword>
<keyword id="KW-0472">Membrane</keyword>
<keyword id="KW-0564">Palmitate</keyword>
<keyword id="KW-0597">Phosphoprotein</keyword>
<keyword id="KW-1185">Reference proteome</keyword>
<keyword id="KW-0732">Signal</keyword>
<keyword id="KW-0812">Transmembrane</keyword>
<keyword id="KW-1133">Transmembrane helix</keyword>
<keyword id="KW-0261">Viral envelope protein</keyword>
<keyword id="KW-1162">Viral penetration into host cytoplasm</keyword>
<keyword id="KW-0946">Virion</keyword>
<keyword id="KW-1160">Virus entry into host cell</keyword>
<dbReference type="EMBL" id="M22446">
    <property type="protein sequence ID" value="AAA46693.1"/>
    <property type="molecule type" value="Genomic_DNA"/>
</dbReference>
<dbReference type="EMBL" id="U75930">
    <property type="protein sequence ID" value="AAC59125.1"/>
    <property type="molecule type" value="Genomic_DNA"/>
</dbReference>
<dbReference type="PIR" id="A30232">
    <property type="entry name" value="VGNVPC"/>
</dbReference>
<dbReference type="RefSeq" id="NP_046282.1">
    <property type="nucleotide sequence ID" value="NC_001875.2"/>
</dbReference>
<dbReference type="SMR" id="P13625"/>
<dbReference type="GlyCosmos" id="P13625">
    <property type="glycosylation" value="7 sites, No reported glycans"/>
</dbReference>
<dbReference type="KEGG" id="vg:912029"/>
<dbReference type="OrthoDB" id="1962at10239"/>
<dbReference type="Proteomes" id="UP000009248">
    <property type="component" value="Genome"/>
</dbReference>
<dbReference type="GO" id="GO:0020002">
    <property type="term" value="C:host cell plasma membrane"/>
    <property type="evidence" value="ECO:0007669"/>
    <property type="project" value="UniProtKB-SubCell"/>
</dbReference>
<dbReference type="GO" id="GO:0016020">
    <property type="term" value="C:membrane"/>
    <property type="evidence" value="ECO:0007669"/>
    <property type="project" value="UniProtKB-KW"/>
</dbReference>
<dbReference type="GO" id="GO:0019031">
    <property type="term" value="C:viral envelope"/>
    <property type="evidence" value="ECO:0007669"/>
    <property type="project" value="UniProtKB-KW"/>
</dbReference>
<dbReference type="GO" id="GO:0055036">
    <property type="term" value="C:virion membrane"/>
    <property type="evidence" value="ECO:0007669"/>
    <property type="project" value="UniProtKB-SubCell"/>
</dbReference>
<dbReference type="GO" id="GO:0039654">
    <property type="term" value="P:fusion of virus membrane with host endosome membrane"/>
    <property type="evidence" value="ECO:0007669"/>
    <property type="project" value="UniProtKB-KW"/>
</dbReference>
<dbReference type="GO" id="GO:0046718">
    <property type="term" value="P:symbiont entry into host cell"/>
    <property type="evidence" value="ECO:0007669"/>
    <property type="project" value="UniProtKB-KW"/>
</dbReference>
<dbReference type="GO" id="GO:0044003">
    <property type="term" value="P:symbiont-mediated perturbation of host process"/>
    <property type="evidence" value="ECO:0007669"/>
    <property type="project" value="InterPro"/>
</dbReference>
<dbReference type="Gene3D" id="2.40.50.710">
    <property type="match status" value="1"/>
</dbReference>
<dbReference type="Gene3D" id="6.10.250.2130">
    <property type="match status" value="1"/>
</dbReference>
<dbReference type="Gene3D" id="6.10.250.3010">
    <property type="match status" value="1"/>
</dbReference>
<dbReference type="Gene3D" id="6.20.460.10">
    <property type="match status" value="1"/>
</dbReference>
<dbReference type="InterPro" id="IPR004955">
    <property type="entry name" value="Baculovirus_Gp64"/>
</dbReference>
<dbReference type="Pfam" id="PF03273">
    <property type="entry name" value="Baculo_gp64"/>
    <property type="match status" value="1"/>
</dbReference>
<organismHost>
    <name type="scientific">Orgyia pseudotsugata</name>
    <name type="common">Douglas-fir tussock moth</name>
    <dbReference type="NCBI Taxonomy" id="33414"/>
</organismHost>
<comment type="function">
    <text>Envelope phosphoglycoprotein which mediates the fusion of viral and host endosomal membranes leading to virus entry into the host cell.</text>
</comment>
<comment type="subcellular location">
    <subcellularLocation>
        <location evidence="3">Virion membrane</location>
        <topology evidence="3">Single-pass membrane protein</topology>
    </subcellularLocation>
    <subcellularLocation>
        <location evidence="3">Host cell membrane</location>
        <topology evidence="3">Single-pass membrane protein</topology>
    </subcellularLocation>
</comment>
<comment type="PTM">
    <text evidence="1">Palmitoylated.</text>
</comment>
<comment type="similarity">
    <text evidence="3">Belongs to the baculoviridae gp64 family.</text>
</comment>
<protein>
    <recommendedName>
        <fullName>Major envelope glycoprotein</fullName>
    </recommendedName>
    <alternativeName>
        <fullName>gp64</fullName>
    </alternativeName>
</protein>